<organism>
    <name type="scientific">Microcystis aeruginosa (strain NIES-843 / IAM M-2473)</name>
    <dbReference type="NCBI Taxonomy" id="449447"/>
    <lineage>
        <taxon>Bacteria</taxon>
        <taxon>Bacillati</taxon>
        <taxon>Cyanobacteriota</taxon>
        <taxon>Cyanophyceae</taxon>
        <taxon>Oscillatoriophycideae</taxon>
        <taxon>Chroococcales</taxon>
        <taxon>Microcystaceae</taxon>
        <taxon>Microcystis</taxon>
    </lineage>
</organism>
<feature type="chain" id="PRO_1000086526" description="Large ribosomal subunit protein uL4">
    <location>
        <begin position="1"/>
        <end position="210"/>
    </location>
</feature>
<feature type="region of interest" description="Disordered" evidence="2">
    <location>
        <begin position="44"/>
        <end position="77"/>
    </location>
</feature>
<feature type="compositionally biased region" description="Basic residues" evidence="2">
    <location>
        <begin position="60"/>
        <end position="71"/>
    </location>
</feature>
<dbReference type="EMBL" id="AP009552">
    <property type="protein sequence ID" value="BAG05564.1"/>
    <property type="molecule type" value="Genomic_DNA"/>
</dbReference>
<dbReference type="RefSeq" id="WP_002732765.1">
    <property type="nucleotide sequence ID" value="NC_010296.1"/>
</dbReference>
<dbReference type="SMR" id="B0JI02"/>
<dbReference type="STRING" id="449447.MAE_57420"/>
<dbReference type="PaxDb" id="449447-MAE_57420"/>
<dbReference type="EnsemblBacteria" id="BAG05564">
    <property type="protein sequence ID" value="BAG05564"/>
    <property type="gene ID" value="MAE_57420"/>
</dbReference>
<dbReference type="KEGG" id="mar:MAE_57420"/>
<dbReference type="eggNOG" id="COG0088">
    <property type="taxonomic scope" value="Bacteria"/>
</dbReference>
<dbReference type="HOGENOM" id="CLU_041575_5_2_3"/>
<dbReference type="BioCyc" id="MAER449447:MAE_RS25025-MONOMER"/>
<dbReference type="Proteomes" id="UP000001510">
    <property type="component" value="Chromosome"/>
</dbReference>
<dbReference type="GO" id="GO:1990904">
    <property type="term" value="C:ribonucleoprotein complex"/>
    <property type="evidence" value="ECO:0007669"/>
    <property type="project" value="UniProtKB-KW"/>
</dbReference>
<dbReference type="GO" id="GO:0005840">
    <property type="term" value="C:ribosome"/>
    <property type="evidence" value="ECO:0007669"/>
    <property type="project" value="UniProtKB-KW"/>
</dbReference>
<dbReference type="GO" id="GO:0019843">
    <property type="term" value="F:rRNA binding"/>
    <property type="evidence" value="ECO:0007669"/>
    <property type="project" value="UniProtKB-UniRule"/>
</dbReference>
<dbReference type="GO" id="GO:0003735">
    <property type="term" value="F:structural constituent of ribosome"/>
    <property type="evidence" value="ECO:0007669"/>
    <property type="project" value="InterPro"/>
</dbReference>
<dbReference type="GO" id="GO:0006412">
    <property type="term" value="P:translation"/>
    <property type="evidence" value="ECO:0007669"/>
    <property type="project" value="UniProtKB-UniRule"/>
</dbReference>
<dbReference type="Gene3D" id="3.40.1370.10">
    <property type="match status" value="1"/>
</dbReference>
<dbReference type="HAMAP" id="MF_01328_B">
    <property type="entry name" value="Ribosomal_uL4_B"/>
    <property type="match status" value="1"/>
</dbReference>
<dbReference type="InterPro" id="IPR002136">
    <property type="entry name" value="Ribosomal_uL4"/>
</dbReference>
<dbReference type="InterPro" id="IPR013005">
    <property type="entry name" value="Ribosomal_uL4-like"/>
</dbReference>
<dbReference type="InterPro" id="IPR023574">
    <property type="entry name" value="Ribosomal_uL4_dom_sf"/>
</dbReference>
<dbReference type="NCBIfam" id="TIGR03953">
    <property type="entry name" value="rplD_bact"/>
    <property type="match status" value="1"/>
</dbReference>
<dbReference type="PANTHER" id="PTHR10746">
    <property type="entry name" value="50S RIBOSOMAL PROTEIN L4"/>
    <property type="match status" value="1"/>
</dbReference>
<dbReference type="PANTHER" id="PTHR10746:SF17">
    <property type="entry name" value="LARGE RIBOSOMAL SUBUNIT PROTEIN UL4C"/>
    <property type="match status" value="1"/>
</dbReference>
<dbReference type="Pfam" id="PF00573">
    <property type="entry name" value="Ribosomal_L4"/>
    <property type="match status" value="1"/>
</dbReference>
<dbReference type="SUPFAM" id="SSF52166">
    <property type="entry name" value="Ribosomal protein L4"/>
    <property type="match status" value="1"/>
</dbReference>
<gene>
    <name evidence="1" type="primary">rplD</name>
    <name evidence="1" type="synonym">rpl4</name>
    <name type="ordered locus">MAE_57420</name>
</gene>
<name>RL4_MICAN</name>
<keyword id="KW-0687">Ribonucleoprotein</keyword>
<keyword id="KW-0689">Ribosomal protein</keyword>
<keyword id="KW-0694">RNA-binding</keyword>
<keyword id="KW-0699">rRNA-binding</keyword>
<reference key="1">
    <citation type="journal article" date="2007" name="DNA Res.">
        <title>Complete genomic structure of the bloom-forming toxic cyanobacterium Microcystis aeruginosa NIES-843.</title>
        <authorList>
            <person name="Kaneko T."/>
            <person name="Nakajima N."/>
            <person name="Okamoto S."/>
            <person name="Suzuki I."/>
            <person name="Tanabe Y."/>
            <person name="Tamaoki M."/>
            <person name="Nakamura Y."/>
            <person name="Kasai F."/>
            <person name="Watanabe A."/>
            <person name="Kawashima K."/>
            <person name="Kishida Y."/>
            <person name="Ono A."/>
            <person name="Shimizu Y."/>
            <person name="Takahashi C."/>
            <person name="Minami C."/>
            <person name="Fujishiro T."/>
            <person name="Kohara M."/>
            <person name="Katoh M."/>
            <person name="Nakazaki N."/>
            <person name="Nakayama S."/>
            <person name="Yamada M."/>
            <person name="Tabata S."/>
            <person name="Watanabe M.M."/>
        </authorList>
    </citation>
    <scope>NUCLEOTIDE SEQUENCE [LARGE SCALE GENOMIC DNA]</scope>
    <source>
        <strain>NIES-843 / IAM M-247</strain>
    </source>
</reference>
<protein>
    <recommendedName>
        <fullName evidence="1">Large ribosomal subunit protein uL4</fullName>
    </recommendedName>
    <alternativeName>
        <fullName evidence="3">50S ribosomal protein L4</fullName>
    </alternativeName>
</protein>
<comment type="function">
    <text evidence="1">One of the primary rRNA binding proteins, this protein initially binds near the 5'-end of the 23S rRNA. It is important during the early stages of 50S assembly. It makes multiple contacts with different domains of the 23S rRNA in the assembled 50S subunit and ribosome.</text>
</comment>
<comment type="function">
    <text evidence="1">Forms part of the polypeptide exit tunnel.</text>
</comment>
<comment type="subunit">
    <text evidence="1">Part of the 50S ribosomal subunit.</text>
</comment>
<comment type="similarity">
    <text evidence="1">Belongs to the universal ribosomal protein uL4 family.</text>
</comment>
<accession>B0JI02</accession>
<sequence length="210" mass="23102">MVNYTVKNWQGEEAGTGTLELKTAKPETAKHLIHRVVVSHLAAARQGNASSKTRSEVRGGGRKPWRQKGTGRARAGSIRSPLWRGGGVIFGPKPRDFEVKVNRKEKRLALRTALISQADNFIVVESFAEQFSQPKTKELTAALSRWGASPEEKILLILTEIPENVYLSGRNICNLKIIRADSLNVYDVILADRVIATAAALAKIEEVYGA</sequence>
<evidence type="ECO:0000255" key="1">
    <source>
        <dbReference type="HAMAP-Rule" id="MF_01328"/>
    </source>
</evidence>
<evidence type="ECO:0000256" key="2">
    <source>
        <dbReference type="SAM" id="MobiDB-lite"/>
    </source>
</evidence>
<evidence type="ECO:0000305" key="3"/>
<proteinExistence type="inferred from homology"/>